<organism>
    <name type="scientific">Rattus norvegicus</name>
    <name type="common">Rat</name>
    <dbReference type="NCBI Taxonomy" id="10116"/>
    <lineage>
        <taxon>Eukaryota</taxon>
        <taxon>Metazoa</taxon>
        <taxon>Chordata</taxon>
        <taxon>Craniata</taxon>
        <taxon>Vertebrata</taxon>
        <taxon>Euteleostomi</taxon>
        <taxon>Mammalia</taxon>
        <taxon>Eutheria</taxon>
        <taxon>Euarchontoglires</taxon>
        <taxon>Glires</taxon>
        <taxon>Rodentia</taxon>
        <taxon>Myomorpha</taxon>
        <taxon>Muroidea</taxon>
        <taxon>Muridae</taxon>
        <taxon>Murinae</taxon>
        <taxon>Rattus</taxon>
    </lineage>
</organism>
<feature type="signal peptide" evidence="4">
    <location>
        <begin position="1"/>
        <end position="23"/>
    </location>
</feature>
<feature type="chain" id="PRO_5000065184" description="Sialomucin core protein 24">
    <location>
        <begin position="24"/>
        <end position="195"/>
    </location>
</feature>
<feature type="topological domain" description="Extracellular" evidence="4">
    <location>
        <begin position="24"/>
        <end position="160"/>
    </location>
</feature>
<feature type="transmembrane region" description="Helical" evidence="4">
    <location>
        <begin position="161"/>
        <end position="181"/>
    </location>
</feature>
<feature type="topological domain" description="Cytoplasmic" evidence="4">
    <location>
        <begin position="182"/>
        <end position="195"/>
    </location>
</feature>
<feature type="region of interest" description="Disordered" evidence="5">
    <location>
        <begin position="27"/>
        <end position="47"/>
    </location>
</feature>
<feature type="region of interest" description="Disordered" evidence="5">
    <location>
        <begin position="114"/>
        <end position="154"/>
    </location>
</feature>
<feature type="region of interest" description="Required for endosomal and lysosomal localization">
    <location>
        <begin position="189"/>
        <end position="195"/>
    </location>
</feature>
<feature type="compositionally biased region" description="Low complexity" evidence="5">
    <location>
        <begin position="119"/>
        <end position="140"/>
    </location>
</feature>
<feature type="compositionally biased region" description="Polar residues" evidence="5">
    <location>
        <begin position="141"/>
        <end position="152"/>
    </location>
</feature>
<feature type="glycosylation site" description="N-linked (GlcNAc...) asparagine" evidence="4">
    <location>
        <position position="26"/>
    </location>
</feature>
<feature type="glycosylation site" description="N-linked (GlcNAc...) asparagine" evidence="4">
    <location>
        <position position="32"/>
    </location>
</feature>
<feature type="glycosylation site" description="N-linked (GlcNAc...) asparagine" evidence="4">
    <location>
        <position position="68"/>
    </location>
</feature>
<feature type="glycosylation site" description="N-linked (GlcNAc...) asparagine" evidence="4">
    <location>
        <position position="74"/>
    </location>
</feature>
<feature type="glycosylation site" description="N-linked (GlcNAc...) asparagine" evidence="4">
    <location>
        <position position="86"/>
    </location>
</feature>
<feature type="glycosylation site" description="N-linked (GlcNAc...) asparagine" evidence="4">
    <location>
        <position position="97"/>
    </location>
</feature>
<feature type="glycosylation site" description="N-linked (GlcNAc...) asparagine" evidence="4">
    <location>
        <position position="118"/>
    </location>
</feature>
<feature type="glycosylation site" description="N-linked (GlcNAc...) asparagine" evidence="4">
    <location>
        <position position="144"/>
    </location>
</feature>
<name>MUC24_RAT</name>
<proteinExistence type="evidence at protein level"/>
<reference key="1">
    <citation type="journal article" date="2000" name="Biochem. J.">
        <title>Endolyn is a mucin-like type I membrane protein targeted to lysosomes by its cytoplasmic tail.</title>
        <authorList>
            <person name="Ihrke G."/>
            <person name="Gray S.R."/>
            <person name="Luzio J.P."/>
        </authorList>
    </citation>
    <scope>NUCLEOTIDE SEQUENCE [MRNA]</scope>
    <scope>PROTEIN SEQUENCE OF 102-112 AND 189-195</scope>
    <scope>SUBCELLULAR LOCATION</scope>
    <scope>TISSUE SPECIFICITY</scope>
    <source>
        <strain>Sprague-Dawley</strain>
        <tissue>Liver</tissue>
    </source>
</reference>
<reference key="2">
    <citation type="submission" date="2005-07" db="EMBL/GenBank/DDBJ databases">
        <authorList>
            <person name="Mural R.J."/>
            <person name="Adams M.D."/>
            <person name="Myers E.W."/>
            <person name="Smith H.O."/>
            <person name="Venter J.C."/>
        </authorList>
    </citation>
    <scope>NUCLEOTIDE SEQUENCE [LARGE SCALE GENOMIC DNA]</scope>
</reference>
<reference key="3">
    <citation type="journal article" date="2004" name="Genome Res.">
        <title>The status, quality, and expansion of the NIH full-length cDNA project: the Mammalian Gene Collection (MGC).</title>
        <authorList>
            <consortium name="The MGC Project Team"/>
        </authorList>
    </citation>
    <scope>NUCLEOTIDE SEQUENCE [LARGE SCALE MRNA]</scope>
    <source>
        <tissue>Prostate</tissue>
    </source>
</reference>
<keyword id="KW-0130">Cell adhesion</keyword>
<keyword id="KW-1003">Cell membrane</keyword>
<keyword id="KW-0903">Direct protein sequencing</keyword>
<keyword id="KW-0967">Endosome</keyword>
<keyword id="KW-0325">Glycoprotein</keyword>
<keyword id="KW-0458">Lysosome</keyword>
<keyword id="KW-0472">Membrane</keyword>
<keyword id="KW-0517">Myogenesis</keyword>
<keyword id="KW-1185">Reference proteome</keyword>
<keyword id="KW-0732">Signal</keyword>
<keyword id="KW-0812">Transmembrane</keyword>
<keyword id="KW-1133">Transmembrane helix</keyword>
<sequence length="195" mass="20476">MSGASRGLFWAATCLAALCLSAAQSNSSASPNVTDPPTTTSKVVPTTLTTTKPPETCESFNSCVSCVNATLTNNITCVWLDCHEANKTYCSSELVSNCTQKTSTDSCSVIPTTPVPTNSTAKPTTRPSSPTPTPSVVTSAGATNTTVTPTSQPERKSTFDAASFIGGIVLVLGVQAVIFFLYKFCKSKERNYHTL</sequence>
<evidence type="ECO:0000250" key="1"/>
<evidence type="ECO:0000250" key="2">
    <source>
        <dbReference type="UniProtKB" id="Q04900"/>
    </source>
</evidence>
<evidence type="ECO:0000250" key="3">
    <source>
        <dbReference type="UniProtKB" id="Q9R0L9"/>
    </source>
</evidence>
<evidence type="ECO:0000255" key="4"/>
<evidence type="ECO:0000256" key="5">
    <source>
        <dbReference type="SAM" id="MobiDB-lite"/>
    </source>
</evidence>
<evidence type="ECO:0000269" key="6">
    <source>
    </source>
</evidence>
<evidence type="ECO:0000305" key="7"/>
<gene>
    <name type="primary">Cd164</name>
</gene>
<protein>
    <recommendedName>
        <fullName>Sialomucin core protein 24</fullName>
        <shortName>MUC-24</shortName>
    </recommendedName>
    <alternativeName>
        <fullName>Endolyn</fullName>
    </alternativeName>
    <alternativeName>
        <fullName>Multi-glycosylated core protein 24</fullName>
        <shortName>MGC-24</shortName>
        <shortName>MGC-24v</shortName>
    </alternativeName>
</protein>
<accession>Q9QX82</accession>
<dbReference type="EMBL" id="AJ238574">
    <property type="protein sequence ID" value="CAB66090.1"/>
    <property type="molecule type" value="mRNA"/>
</dbReference>
<dbReference type="EMBL" id="CH474025">
    <property type="protein sequence ID" value="EDL99731.1"/>
    <property type="molecule type" value="Genomic_DNA"/>
</dbReference>
<dbReference type="EMBL" id="BC062064">
    <property type="protein sequence ID" value="AAH62064.1"/>
    <property type="molecule type" value="mRNA"/>
</dbReference>
<dbReference type="RefSeq" id="NP_114000.1">
    <property type="nucleotide sequence ID" value="NM_031812.1"/>
</dbReference>
<dbReference type="SMR" id="Q9QX82"/>
<dbReference type="FunCoup" id="Q9QX82">
    <property type="interactions" value="947"/>
</dbReference>
<dbReference type="STRING" id="10116.ENSRNOP00000000334"/>
<dbReference type="GlyCosmos" id="Q9QX82">
    <property type="glycosylation" value="8 sites, No reported glycans"/>
</dbReference>
<dbReference type="GlyGen" id="Q9QX82">
    <property type="glycosylation" value="10 sites"/>
</dbReference>
<dbReference type="PhosphoSitePlus" id="Q9QX82"/>
<dbReference type="PaxDb" id="10116-ENSRNOP00000000334"/>
<dbReference type="Ensembl" id="ENSRNOT00000101562.1">
    <property type="protein sequence ID" value="ENSRNOP00000092693.1"/>
    <property type="gene ID" value="ENSRNOG00000000304.8"/>
</dbReference>
<dbReference type="GeneID" id="83689"/>
<dbReference type="KEGG" id="rno:83689"/>
<dbReference type="AGR" id="RGD:70942"/>
<dbReference type="CTD" id="8763"/>
<dbReference type="RGD" id="70942">
    <property type="gene designation" value="Cd164"/>
</dbReference>
<dbReference type="eggNOG" id="ENOG502S7HA">
    <property type="taxonomic scope" value="Eukaryota"/>
</dbReference>
<dbReference type="GeneTree" id="ENSGT00530000063929"/>
<dbReference type="HOGENOM" id="CLU_101414_0_0_1"/>
<dbReference type="InParanoid" id="Q9QX82"/>
<dbReference type="OMA" id="CFWMECK"/>
<dbReference type="OrthoDB" id="6160056at2759"/>
<dbReference type="PhylomeDB" id="Q9QX82"/>
<dbReference type="TreeFam" id="TF333380"/>
<dbReference type="PRO" id="PR:Q9QX82"/>
<dbReference type="Proteomes" id="UP000002494">
    <property type="component" value="Chromosome 20"/>
</dbReference>
<dbReference type="Proteomes" id="UP000234681">
    <property type="component" value="Chromosome 20"/>
</dbReference>
<dbReference type="Bgee" id="ENSRNOG00000000304">
    <property type="expression patterns" value="Expressed in liver and 19 other cell types or tissues"/>
</dbReference>
<dbReference type="ExpressionAtlas" id="Q9QX82">
    <property type="expression patterns" value="baseline and differential"/>
</dbReference>
<dbReference type="GO" id="GO:0005768">
    <property type="term" value="C:endosome"/>
    <property type="evidence" value="ECO:0000314"/>
    <property type="project" value="RGD"/>
</dbReference>
<dbReference type="GO" id="GO:0010008">
    <property type="term" value="C:endosome membrane"/>
    <property type="evidence" value="ECO:0007669"/>
    <property type="project" value="UniProtKB-SubCell"/>
</dbReference>
<dbReference type="GO" id="GO:0005765">
    <property type="term" value="C:lysosomal membrane"/>
    <property type="evidence" value="ECO:0007669"/>
    <property type="project" value="UniProtKB-SubCell"/>
</dbReference>
<dbReference type="GO" id="GO:0005764">
    <property type="term" value="C:lysosome"/>
    <property type="evidence" value="ECO:0000266"/>
    <property type="project" value="RGD"/>
</dbReference>
<dbReference type="GO" id="GO:0005886">
    <property type="term" value="C:plasma membrane"/>
    <property type="evidence" value="ECO:0000250"/>
    <property type="project" value="UniProtKB"/>
</dbReference>
<dbReference type="GO" id="GO:0007155">
    <property type="term" value="P:cell adhesion"/>
    <property type="evidence" value="ECO:0000266"/>
    <property type="project" value="RGD"/>
</dbReference>
<dbReference type="GO" id="GO:0007157">
    <property type="term" value="P:heterophilic cell-cell adhesion via plasma membrane cell adhesion molecules"/>
    <property type="evidence" value="ECO:0000266"/>
    <property type="project" value="RGD"/>
</dbReference>
<dbReference type="GO" id="GO:0007517">
    <property type="term" value="P:muscle organ development"/>
    <property type="evidence" value="ECO:0007669"/>
    <property type="project" value="UniProtKB-KW"/>
</dbReference>
<dbReference type="InterPro" id="IPR007947">
    <property type="entry name" value="CD164_MGC24"/>
</dbReference>
<dbReference type="PANTHER" id="PTHR11337">
    <property type="entry name" value="MUCIN/PORIMIN"/>
    <property type="match status" value="1"/>
</dbReference>
<dbReference type="PANTHER" id="PTHR11337:SF12">
    <property type="entry name" value="SIALOMUCIN CORE PROTEIN 24"/>
    <property type="match status" value="1"/>
</dbReference>
<dbReference type="Pfam" id="PF05283">
    <property type="entry name" value="MGC-24"/>
    <property type="match status" value="1"/>
</dbReference>
<dbReference type="PRINTS" id="PR01701">
    <property type="entry name" value="CD164ANTIGEN"/>
</dbReference>
<comment type="function">
    <text evidence="3">Sialomucin that may play a key role in hematopoiesis. May be involved in cell adhesion. Promotes myogenesis by enhancing CXCR4-dependent cell motility. Positively regulates myoblast migration and promotes myoblast fusion into myotubes (By similarity).</text>
</comment>
<comment type="subunit">
    <text evidence="2">Interacts with CXCR4.</text>
</comment>
<comment type="subcellular location">
    <subcellularLocation>
        <location evidence="2">Cell membrane</location>
        <topology evidence="2">Single-pass type I membrane protein</topology>
    </subcellularLocation>
    <subcellularLocation>
        <location evidence="6">Lysosome membrane</location>
        <topology evidence="6">Single-pass type I membrane protein</topology>
    </subcellularLocation>
    <subcellularLocation>
        <location evidence="6">Endosome membrane</location>
        <topology evidence="6">Single-pass type I membrane protein</topology>
    </subcellularLocation>
</comment>
<comment type="tissue specificity">
    <text evidence="6">Ubiquitous. Expressed at highest levels in the liver, kidney, lung and intestine.</text>
</comment>
<comment type="PTM">
    <text evidence="1">Highly N- and O-glycosylated; contains sialic acid.</text>
</comment>
<comment type="similarity">
    <text evidence="7">Belongs to the CD164 family.</text>
</comment>